<name>COAD_VIBCM</name>
<proteinExistence type="inferred from homology"/>
<feature type="chain" id="PRO_1000123311" description="Phosphopantetheine adenylyltransferase">
    <location>
        <begin position="1"/>
        <end position="164"/>
    </location>
</feature>
<feature type="binding site" evidence="1">
    <location>
        <begin position="14"/>
        <end position="15"/>
    </location>
    <ligand>
        <name>ATP</name>
        <dbReference type="ChEBI" id="CHEBI:30616"/>
    </ligand>
</feature>
<feature type="binding site" evidence="1">
    <location>
        <position position="14"/>
    </location>
    <ligand>
        <name>substrate</name>
    </ligand>
</feature>
<feature type="binding site" evidence="1">
    <location>
        <position position="22"/>
    </location>
    <ligand>
        <name>ATP</name>
        <dbReference type="ChEBI" id="CHEBI:30616"/>
    </ligand>
</feature>
<feature type="binding site" evidence="1">
    <location>
        <position position="46"/>
    </location>
    <ligand>
        <name>substrate</name>
    </ligand>
</feature>
<feature type="binding site" evidence="1">
    <location>
        <position position="78"/>
    </location>
    <ligand>
        <name>substrate</name>
    </ligand>
</feature>
<feature type="binding site" evidence="1">
    <location>
        <position position="92"/>
    </location>
    <ligand>
        <name>substrate</name>
    </ligand>
</feature>
<feature type="binding site" evidence="1">
    <location>
        <begin position="93"/>
        <end position="95"/>
    </location>
    <ligand>
        <name>ATP</name>
        <dbReference type="ChEBI" id="CHEBI:30616"/>
    </ligand>
</feature>
<feature type="binding site" evidence="1">
    <location>
        <position position="103"/>
    </location>
    <ligand>
        <name>ATP</name>
        <dbReference type="ChEBI" id="CHEBI:30616"/>
    </ligand>
</feature>
<feature type="binding site" evidence="1">
    <location>
        <begin position="128"/>
        <end position="134"/>
    </location>
    <ligand>
        <name>ATP</name>
        <dbReference type="ChEBI" id="CHEBI:30616"/>
    </ligand>
</feature>
<feature type="site" description="Transition state stabilizer" evidence="1">
    <location>
        <position position="22"/>
    </location>
</feature>
<keyword id="KW-0067">ATP-binding</keyword>
<keyword id="KW-0173">Coenzyme A biosynthesis</keyword>
<keyword id="KW-0963">Cytoplasm</keyword>
<keyword id="KW-0460">Magnesium</keyword>
<keyword id="KW-0547">Nucleotide-binding</keyword>
<keyword id="KW-0548">Nucleotidyltransferase</keyword>
<keyword id="KW-0808">Transferase</keyword>
<reference key="1">
    <citation type="journal article" date="2008" name="PLoS ONE">
        <title>A recalibrated molecular clock and independent origins for the cholera pandemic clones.</title>
        <authorList>
            <person name="Feng L."/>
            <person name="Reeves P.R."/>
            <person name="Lan R."/>
            <person name="Ren Y."/>
            <person name="Gao C."/>
            <person name="Zhou Z."/>
            <person name="Ren Y."/>
            <person name="Cheng J."/>
            <person name="Wang W."/>
            <person name="Wang J."/>
            <person name="Qian W."/>
            <person name="Li D."/>
            <person name="Wang L."/>
        </authorList>
    </citation>
    <scope>NUCLEOTIDE SEQUENCE [LARGE SCALE GENOMIC DNA]</scope>
    <source>
        <strain>M66-2</strain>
    </source>
</reference>
<evidence type="ECO:0000255" key="1">
    <source>
        <dbReference type="HAMAP-Rule" id="MF_00151"/>
    </source>
</evidence>
<gene>
    <name evidence="1" type="primary">coaD</name>
    <name type="ordered locus">VCM66_0210</name>
</gene>
<organism>
    <name type="scientific">Vibrio cholerae serotype O1 (strain M66-2)</name>
    <dbReference type="NCBI Taxonomy" id="579112"/>
    <lineage>
        <taxon>Bacteria</taxon>
        <taxon>Pseudomonadati</taxon>
        <taxon>Pseudomonadota</taxon>
        <taxon>Gammaproteobacteria</taxon>
        <taxon>Vibrionales</taxon>
        <taxon>Vibrionaceae</taxon>
        <taxon>Vibrio</taxon>
    </lineage>
</organism>
<accession>C3LQI4</accession>
<sequence length="164" mass="18264">MSQKRLSRVIYPGTFDPITNGHLDLIERAAQMFDEVIIAVAASPSKNTLFTLEERVEFARQVTSHLDNVSAKGFSGLLVDFAKAEKANVLIRGLRTTVDFEYEFGLTNMYRRLMPGLESVFLTPAEEHAFISSTLVREVAIHGGNVDEFVPAIVANALHQKKKI</sequence>
<comment type="function">
    <text evidence="1">Reversibly transfers an adenylyl group from ATP to 4'-phosphopantetheine, yielding dephospho-CoA (dPCoA) and pyrophosphate.</text>
</comment>
<comment type="catalytic activity">
    <reaction evidence="1">
        <text>(R)-4'-phosphopantetheine + ATP + H(+) = 3'-dephospho-CoA + diphosphate</text>
        <dbReference type="Rhea" id="RHEA:19801"/>
        <dbReference type="ChEBI" id="CHEBI:15378"/>
        <dbReference type="ChEBI" id="CHEBI:30616"/>
        <dbReference type="ChEBI" id="CHEBI:33019"/>
        <dbReference type="ChEBI" id="CHEBI:57328"/>
        <dbReference type="ChEBI" id="CHEBI:61723"/>
        <dbReference type="EC" id="2.7.7.3"/>
    </reaction>
</comment>
<comment type="cofactor">
    <cofactor evidence="1">
        <name>Mg(2+)</name>
        <dbReference type="ChEBI" id="CHEBI:18420"/>
    </cofactor>
</comment>
<comment type="pathway">
    <text evidence="1">Cofactor biosynthesis; coenzyme A biosynthesis; CoA from (R)-pantothenate: step 4/5.</text>
</comment>
<comment type="subunit">
    <text evidence="1">Homohexamer.</text>
</comment>
<comment type="subcellular location">
    <subcellularLocation>
        <location evidence="1">Cytoplasm</location>
    </subcellularLocation>
</comment>
<comment type="similarity">
    <text evidence="1">Belongs to the bacterial CoaD family.</text>
</comment>
<protein>
    <recommendedName>
        <fullName evidence="1">Phosphopantetheine adenylyltransferase</fullName>
        <ecNumber evidence="1">2.7.7.3</ecNumber>
    </recommendedName>
    <alternativeName>
        <fullName evidence="1">Dephospho-CoA pyrophosphorylase</fullName>
    </alternativeName>
    <alternativeName>
        <fullName evidence="1">Pantetheine-phosphate adenylyltransferase</fullName>
        <shortName evidence="1">PPAT</shortName>
    </alternativeName>
</protein>
<dbReference type="EC" id="2.7.7.3" evidence="1"/>
<dbReference type="EMBL" id="CP001233">
    <property type="protein sequence ID" value="ACP04542.1"/>
    <property type="molecule type" value="Genomic_DNA"/>
</dbReference>
<dbReference type="RefSeq" id="WP_000078888.1">
    <property type="nucleotide sequence ID" value="NC_012578.1"/>
</dbReference>
<dbReference type="SMR" id="C3LQI4"/>
<dbReference type="KEGG" id="vcm:VCM66_0210"/>
<dbReference type="HOGENOM" id="CLU_100149_0_1_6"/>
<dbReference type="UniPathway" id="UPA00241">
    <property type="reaction ID" value="UER00355"/>
</dbReference>
<dbReference type="Proteomes" id="UP000001217">
    <property type="component" value="Chromosome I"/>
</dbReference>
<dbReference type="GO" id="GO:0005737">
    <property type="term" value="C:cytoplasm"/>
    <property type="evidence" value="ECO:0007669"/>
    <property type="project" value="UniProtKB-SubCell"/>
</dbReference>
<dbReference type="GO" id="GO:0005524">
    <property type="term" value="F:ATP binding"/>
    <property type="evidence" value="ECO:0007669"/>
    <property type="project" value="UniProtKB-KW"/>
</dbReference>
<dbReference type="GO" id="GO:0004595">
    <property type="term" value="F:pantetheine-phosphate adenylyltransferase activity"/>
    <property type="evidence" value="ECO:0007669"/>
    <property type="project" value="UniProtKB-UniRule"/>
</dbReference>
<dbReference type="GO" id="GO:0015937">
    <property type="term" value="P:coenzyme A biosynthetic process"/>
    <property type="evidence" value="ECO:0007669"/>
    <property type="project" value="UniProtKB-UniRule"/>
</dbReference>
<dbReference type="CDD" id="cd02163">
    <property type="entry name" value="PPAT"/>
    <property type="match status" value="1"/>
</dbReference>
<dbReference type="FunFam" id="3.40.50.620:FF:000012">
    <property type="entry name" value="Phosphopantetheine adenylyltransferase"/>
    <property type="match status" value="1"/>
</dbReference>
<dbReference type="Gene3D" id="3.40.50.620">
    <property type="entry name" value="HUPs"/>
    <property type="match status" value="1"/>
</dbReference>
<dbReference type="HAMAP" id="MF_00151">
    <property type="entry name" value="PPAT_bact"/>
    <property type="match status" value="1"/>
</dbReference>
<dbReference type="InterPro" id="IPR004821">
    <property type="entry name" value="Cyt_trans-like"/>
</dbReference>
<dbReference type="InterPro" id="IPR001980">
    <property type="entry name" value="PPAT"/>
</dbReference>
<dbReference type="InterPro" id="IPR014729">
    <property type="entry name" value="Rossmann-like_a/b/a_fold"/>
</dbReference>
<dbReference type="NCBIfam" id="TIGR01510">
    <property type="entry name" value="coaD_prev_kdtB"/>
    <property type="match status" value="1"/>
</dbReference>
<dbReference type="NCBIfam" id="TIGR00125">
    <property type="entry name" value="cyt_tran_rel"/>
    <property type="match status" value="1"/>
</dbReference>
<dbReference type="PANTHER" id="PTHR21342">
    <property type="entry name" value="PHOSPHOPANTETHEINE ADENYLYLTRANSFERASE"/>
    <property type="match status" value="1"/>
</dbReference>
<dbReference type="PANTHER" id="PTHR21342:SF1">
    <property type="entry name" value="PHOSPHOPANTETHEINE ADENYLYLTRANSFERASE"/>
    <property type="match status" value="1"/>
</dbReference>
<dbReference type="Pfam" id="PF01467">
    <property type="entry name" value="CTP_transf_like"/>
    <property type="match status" value="1"/>
</dbReference>
<dbReference type="PRINTS" id="PR01020">
    <property type="entry name" value="LPSBIOSNTHSS"/>
</dbReference>
<dbReference type="SUPFAM" id="SSF52374">
    <property type="entry name" value="Nucleotidylyl transferase"/>
    <property type="match status" value="1"/>
</dbReference>